<protein>
    <recommendedName>
        <fullName>Rab GDP dissociation inhibitor alpha</fullName>
        <shortName>Rab GDI alpha</shortName>
    </recommendedName>
    <alternativeName>
        <fullName>Guanosine diphosphate dissociation inhibitor 1</fullName>
        <shortName>GDI-1</shortName>
    </alternativeName>
    <alternativeName>
        <fullName>Oligophrenin-2</fullName>
    </alternativeName>
    <alternativeName>
        <fullName>Protein XAP-4</fullName>
    </alternativeName>
</protein>
<accession>P31150</accession>
<accession>P50394</accession>
<accession>Q6FG50</accession>
<accession>Q7Z2G6</accession>
<accession>Q7Z2G9</accession>
<accession>Q7Z2H5</accession>
<accession>Q7Z2I6</accession>
<reference key="1">
    <citation type="journal article" date="1994" name="Mamm. Genome">
        <title>Evolutionary conservation and genomic organization of XAP-4, an Xq28 located gene coding for a human rab GDP-dissociation inhibitor (GDI).</title>
        <authorList>
            <person name="Sedlacek Z."/>
            <person name="Konecki D.S."/>
            <person name="Korn B."/>
            <person name="Klauck S.M."/>
            <person name="Poustka A."/>
        </authorList>
    </citation>
    <scope>NUCLEOTIDE SEQUENCE [GENOMIC DNA / MRNA]</scope>
</reference>
<reference key="2">
    <citation type="journal article" date="1995" name="Cancer Res.">
        <title>Cloning of a brain-type isoform of human Rab GDI and its expression in human neuroblastoma cell lines and tumor specimens.</title>
        <authorList>
            <person name="Nishimura N."/>
            <person name="Goji J."/>
            <person name="Nakamura H."/>
            <person name="Orita S."/>
            <person name="Takai Y."/>
            <person name="Sano K."/>
        </authorList>
    </citation>
    <scope>NUCLEOTIDE SEQUENCE [MRNA]</scope>
    <source>
        <tissue>Retina</tissue>
    </source>
</reference>
<reference key="3">
    <citation type="journal article" date="1996" name="Hum. Mol. Genet.">
        <title>Long-range sequence analysis in Xq28: thirteen known and six candidate genes in 219.4 kb of high GC DNA between the RCP/GCP and G6PD loci.</title>
        <authorList>
            <person name="Chen E.Y."/>
            <person name="Zollo M."/>
            <person name="Mazzarella R.A."/>
            <person name="Ciccodicola A."/>
            <person name="Chen C.-N."/>
            <person name="Zuo L."/>
            <person name="Heiner C."/>
            <person name="Burough F.W."/>
            <person name="Ripetto M."/>
            <person name="Schlessinger D."/>
            <person name="D'Urso M."/>
        </authorList>
    </citation>
    <scope>NUCLEOTIDE SEQUENCE [GENOMIC DNA / MRNA]</scope>
</reference>
<reference key="4">
    <citation type="submission" date="2001-07" db="EMBL/GenBank/DDBJ databases">
        <authorList>
            <person name="Feng Z."/>
            <person name="Zhang B."/>
            <person name="Zhou Y."/>
            <person name="Peng X."/>
            <person name="Yuan J."/>
            <person name="Qiang B."/>
        </authorList>
    </citation>
    <scope>NUCLEOTIDE SEQUENCE [MRNA]</scope>
</reference>
<reference key="5">
    <citation type="journal article" date="2003" name="Mol. Biol. Evol.">
        <title>Gene diversity patterns at 10 X-chromosomal loci in humans and chimpanzees.</title>
        <authorList>
            <person name="Kitano T."/>
            <person name="Schwarz C."/>
            <person name="Nickel B."/>
            <person name="Paeaebo S."/>
        </authorList>
    </citation>
    <scope>NUCLEOTIDE SEQUENCE [GENOMIC DNA / MRNA]</scope>
</reference>
<reference key="6">
    <citation type="submission" date="2004-06" db="EMBL/GenBank/DDBJ databases">
        <title>Cloning of human full open reading frames in Gateway(TM) system entry vector (pDONR201).</title>
        <authorList>
            <person name="Ebert L."/>
            <person name="Schick M."/>
            <person name="Neubert P."/>
            <person name="Schatten R."/>
            <person name="Henze S."/>
            <person name="Korn B."/>
        </authorList>
    </citation>
    <scope>NUCLEOTIDE SEQUENCE [LARGE SCALE MRNA]</scope>
</reference>
<reference key="7">
    <citation type="submission" date="2004-10" db="EMBL/GenBank/DDBJ databases">
        <title>Cloning of human full-length CDSs in BD Creator(TM) system donor vector.</title>
        <authorList>
            <person name="Kalnine N."/>
            <person name="Chen X."/>
            <person name="Rolfs A."/>
            <person name="Halleck A."/>
            <person name="Hines L."/>
            <person name="Eisenstein S."/>
            <person name="Koundinya M."/>
            <person name="Raphael J."/>
            <person name="Moreira D."/>
            <person name="Kelley T."/>
            <person name="LaBaer J."/>
            <person name="Lin Y."/>
            <person name="Phelan M."/>
            <person name="Farmer A."/>
        </authorList>
    </citation>
    <scope>NUCLEOTIDE SEQUENCE [LARGE SCALE MRNA]</scope>
</reference>
<reference key="8">
    <citation type="journal article" date="2005" name="Nature">
        <title>The DNA sequence of the human X chromosome.</title>
        <authorList>
            <person name="Ross M.T."/>
            <person name="Grafham D.V."/>
            <person name="Coffey A.J."/>
            <person name="Scherer S."/>
            <person name="McLay K."/>
            <person name="Muzny D."/>
            <person name="Platzer M."/>
            <person name="Howell G.R."/>
            <person name="Burrows C."/>
            <person name="Bird C.P."/>
            <person name="Frankish A."/>
            <person name="Lovell F.L."/>
            <person name="Howe K.L."/>
            <person name="Ashurst J.L."/>
            <person name="Fulton R.S."/>
            <person name="Sudbrak R."/>
            <person name="Wen G."/>
            <person name="Jones M.C."/>
            <person name="Hurles M.E."/>
            <person name="Andrews T.D."/>
            <person name="Scott C.E."/>
            <person name="Searle S."/>
            <person name="Ramser J."/>
            <person name="Whittaker A."/>
            <person name="Deadman R."/>
            <person name="Carter N.P."/>
            <person name="Hunt S.E."/>
            <person name="Chen R."/>
            <person name="Cree A."/>
            <person name="Gunaratne P."/>
            <person name="Havlak P."/>
            <person name="Hodgson A."/>
            <person name="Metzker M.L."/>
            <person name="Richards S."/>
            <person name="Scott G."/>
            <person name="Steffen D."/>
            <person name="Sodergren E."/>
            <person name="Wheeler D.A."/>
            <person name="Worley K.C."/>
            <person name="Ainscough R."/>
            <person name="Ambrose K.D."/>
            <person name="Ansari-Lari M.A."/>
            <person name="Aradhya S."/>
            <person name="Ashwell R.I."/>
            <person name="Babbage A.K."/>
            <person name="Bagguley C.L."/>
            <person name="Ballabio A."/>
            <person name="Banerjee R."/>
            <person name="Barker G.E."/>
            <person name="Barlow K.F."/>
            <person name="Barrett I.P."/>
            <person name="Bates K.N."/>
            <person name="Beare D.M."/>
            <person name="Beasley H."/>
            <person name="Beasley O."/>
            <person name="Beck A."/>
            <person name="Bethel G."/>
            <person name="Blechschmidt K."/>
            <person name="Brady N."/>
            <person name="Bray-Allen S."/>
            <person name="Bridgeman A.M."/>
            <person name="Brown A.J."/>
            <person name="Brown M.J."/>
            <person name="Bonnin D."/>
            <person name="Bruford E.A."/>
            <person name="Buhay C."/>
            <person name="Burch P."/>
            <person name="Burford D."/>
            <person name="Burgess J."/>
            <person name="Burrill W."/>
            <person name="Burton J."/>
            <person name="Bye J.M."/>
            <person name="Carder C."/>
            <person name="Carrel L."/>
            <person name="Chako J."/>
            <person name="Chapman J.C."/>
            <person name="Chavez D."/>
            <person name="Chen E."/>
            <person name="Chen G."/>
            <person name="Chen Y."/>
            <person name="Chen Z."/>
            <person name="Chinault C."/>
            <person name="Ciccodicola A."/>
            <person name="Clark S.Y."/>
            <person name="Clarke G."/>
            <person name="Clee C.M."/>
            <person name="Clegg S."/>
            <person name="Clerc-Blankenburg K."/>
            <person name="Clifford K."/>
            <person name="Cobley V."/>
            <person name="Cole C.G."/>
            <person name="Conquer J.S."/>
            <person name="Corby N."/>
            <person name="Connor R.E."/>
            <person name="David R."/>
            <person name="Davies J."/>
            <person name="Davis C."/>
            <person name="Davis J."/>
            <person name="Delgado O."/>
            <person name="Deshazo D."/>
            <person name="Dhami P."/>
            <person name="Ding Y."/>
            <person name="Dinh H."/>
            <person name="Dodsworth S."/>
            <person name="Draper H."/>
            <person name="Dugan-Rocha S."/>
            <person name="Dunham A."/>
            <person name="Dunn M."/>
            <person name="Durbin K.J."/>
            <person name="Dutta I."/>
            <person name="Eades T."/>
            <person name="Ellwood M."/>
            <person name="Emery-Cohen A."/>
            <person name="Errington H."/>
            <person name="Evans K.L."/>
            <person name="Faulkner L."/>
            <person name="Francis F."/>
            <person name="Frankland J."/>
            <person name="Fraser A.E."/>
            <person name="Galgoczy P."/>
            <person name="Gilbert J."/>
            <person name="Gill R."/>
            <person name="Gloeckner G."/>
            <person name="Gregory S.G."/>
            <person name="Gribble S."/>
            <person name="Griffiths C."/>
            <person name="Grocock R."/>
            <person name="Gu Y."/>
            <person name="Gwilliam R."/>
            <person name="Hamilton C."/>
            <person name="Hart E.A."/>
            <person name="Hawes A."/>
            <person name="Heath P.D."/>
            <person name="Heitmann K."/>
            <person name="Hennig S."/>
            <person name="Hernandez J."/>
            <person name="Hinzmann B."/>
            <person name="Ho S."/>
            <person name="Hoffs M."/>
            <person name="Howden P.J."/>
            <person name="Huckle E.J."/>
            <person name="Hume J."/>
            <person name="Hunt P.J."/>
            <person name="Hunt A.R."/>
            <person name="Isherwood J."/>
            <person name="Jacob L."/>
            <person name="Johnson D."/>
            <person name="Jones S."/>
            <person name="de Jong P.J."/>
            <person name="Joseph S.S."/>
            <person name="Keenan S."/>
            <person name="Kelly S."/>
            <person name="Kershaw J.K."/>
            <person name="Khan Z."/>
            <person name="Kioschis P."/>
            <person name="Klages S."/>
            <person name="Knights A.J."/>
            <person name="Kosiura A."/>
            <person name="Kovar-Smith C."/>
            <person name="Laird G.K."/>
            <person name="Langford C."/>
            <person name="Lawlor S."/>
            <person name="Leversha M."/>
            <person name="Lewis L."/>
            <person name="Liu W."/>
            <person name="Lloyd C."/>
            <person name="Lloyd D.M."/>
            <person name="Loulseged H."/>
            <person name="Loveland J.E."/>
            <person name="Lovell J.D."/>
            <person name="Lozado R."/>
            <person name="Lu J."/>
            <person name="Lyne R."/>
            <person name="Ma J."/>
            <person name="Maheshwari M."/>
            <person name="Matthews L.H."/>
            <person name="McDowall J."/>
            <person name="McLaren S."/>
            <person name="McMurray A."/>
            <person name="Meidl P."/>
            <person name="Meitinger T."/>
            <person name="Milne S."/>
            <person name="Miner G."/>
            <person name="Mistry S.L."/>
            <person name="Morgan M."/>
            <person name="Morris S."/>
            <person name="Mueller I."/>
            <person name="Mullikin J.C."/>
            <person name="Nguyen N."/>
            <person name="Nordsiek G."/>
            <person name="Nyakatura G."/>
            <person name="O'dell C.N."/>
            <person name="Okwuonu G."/>
            <person name="Palmer S."/>
            <person name="Pandian R."/>
            <person name="Parker D."/>
            <person name="Parrish J."/>
            <person name="Pasternak S."/>
            <person name="Patel D."/>
            <person name="Pearce A.V."/>
            <person name="Pearson D.M."/>
            <person name="Pelan S.E."/>
            <person name="Perez L."/>
            <person name="Porter K.M."/>
            <person name="Ramsey Y."/>
            <person name="Reichwald K."/>
            <person name="Rhodes S."/>
            <person name="Ridler K.A."/>
            <person name="Schlessinger D."/>
            <person name="Schueler M.G."/>
            <person name="Sehra H.K."/>
            <person name="Shaw-Smith C."/>
            <person name="Shen H."/>
            <person name="Sheridan E.M."/>
            <person name="Shownkeen R."/>
            <person name="Skuce C.D."/>
            <person name="Smith M.L."/>
            <person name="Sotheran E.C."/>
            <person name="Steingruber H.E."/>
            <person name="Steward C.A."/>
            <person name="Storey R."/>
            <person name="Swann R.M."/>
            <person name="Swarbreck D."/>
            <person name="Tabor P.E."/>
            <person name="Taudien S."/>
            <person name="Taylor T."/>
            <person name="Teague B."/>
            <person name="Thomas K."/>
            <person name="Thorpe A."/>
            <person name="Timms K."/>
            <person name="Tracey A."/>
            <person name="Trevanion S."/>
            <person name="Tromans A.C."/>
            <person name="d'Urso M."/>
            <person name="Verduzco D."/>
            <person name="Villasana D."/>
            <person name="Waldron L."/>
            <person name="Wall M."/>
            <person name="Wang Q."/>
            <person name="Warren J."/>
            <person name="Warry G.L."/>
            <person name="Wei X."/>
            <person name="West A."/>
            <person name="Whitehead S.L."/>
            <person name="Whiteley M.N."/>
            <person name="Wilkinson J.E."/>
            <person name="Willey D.L."/>
            <person name="Williams G."/>
            <person name="Williams L."/>
            <person name="Williamson A."/>
            <person name="Williamson H."/>
            <person name="Wilming L."/>
            <person name="Woodmansey R.L."/>
            <person name="Wray P.W."/>
            <person name="Yen J."/>
            <person name="Zhang J."/>
            <person name="Zhou J."/>
            <person name="Zoghbi H."/>
            <person name="Zorilla S."/>
            <person name="Buck D."/>
            <person name="Reinhardt R."/>
            <person name="Poustka A."/>
            <person name="Rosenthal A."/>
            <person name="Lehrach H."/>
            <person name="Meindl A."/>
            <person name="Minx P.J."/>
            <person name="Hillier L.W."/>
            <person name="Willard H.F."/>
            <person name="Wilson R.K."/>
            <person name="Waterston R.H."/>
            <person name="Rice C.M."/>
            <person name="Vaudin M."/>
            <person name="Coulson A."/>
            <person name="Nelson D.L."/>
            <person name="Weinstock G."/>
            <person name="Sulston J.E."/>
            <person name="Durbin R.M."/>
            <person name="Hubbard T."/>
            <person name="Gibbs R.A."/>
            <person name="Beck S."/>
            <person name="Rogers J."/>
            <person name="Bentley D.R."/>
        </authorList>
    </citation>
    <scope>NUCLEOTIDE SEQUENCE [LARGE SCALE GENOMIC DNA]</scope>
</reference>
<reference key="9">
    <citation type="submission" date="2005-09" db="EMBL/GenBank/DDBJ databases">
        <authorList>
            <person name="Mural R.J."/>
            <person name="Istrail S."/>
            <person name="Sutton G.G."/>
            <person name="Florea L."/>
            <person name="Halpern A.L."/>
            <person name="Mobarry C.M."/>
            <person name="Lippert R."/>
            <person name="Walenz B."/>
            <person name="Shatkay H."/>
            <person name="Dew I."/>
            <person name="Miller J.R."/>
            <person name="Flanigan M.J."/>
            <person name="Edwards N.J."/>
            <person name="Bolanos R."/>
            <person name="Fasulo D."/>
            <person name="Halldorsson B.V."/>
            <person name="Hannenhalli S."/>
            <person name="Turner R."/>
            <person name="Yooseph S."/>
            <person name="Lu F."/>
            <person name="Nusskern D.R."/>
            <person name="Shue B.C."/>
            <person name="Zheng X.H."/>
            <person name="Zhong F."/>
            <person name="Delcher A.L."/>
            <person name="Huson D.H."/>
            <person name="Kravitz S.A."/>
            <person name="Mouchard L."/>
            <person name="Reinert K."/>
            <person name="Remington K.A."/>
            <person name="Clark A.G."/>
            <person name="Waterman M.S."/>
            <person name="Eichler E.E."/>
            <person name="Adams M.D."/>
            <person name="Hunkapiller M.W."/>
            <person name="Myers E.W."/>
            <person name="Venter J.C."/>
        </authorList>
    </citation>
    <scope>NUCLEOTIDE SEQUENCE [LARGE SCALE GENOMIC DNA]</scope>
</reference>
<reference key="10">
    <citation type="journal article" date="2004" name="Genome Res.">
        <title>The status, quality, and expansion of the NIH full-length cDNA project: the Mammalian Gene Collection (MGC).</title>
        <authorList>
            <consortium name="The MGC Project Team"/>
        </authorList>
    </citation>
    <scope>NUCLEOTIDE SEQUENCE [LARGE SCALE MRNA]</scope>
    <source>
        <tissue>Brain</tissue>
        <tissue>Lung</tissue>
    </source>
</reference>
<reference key="11">
    <citation type="submission" date="1994-09" db="EMBL/GenBank/DDBJ databases">
        <title>Rapid identification of gene sequences for transcriptional map assembly by direct cDNA screening of genomic reference libraries.</title>
        <authorList>
            <person name="Hochgeschwender U."/>
        </authorList>
    </citation>
    <scope>NUCLEOTIDE SEQUENCE [GENOMIC DNA] OF 143-181</scope>
</reference>
<reference key="12">
    <citation type="submission" date="2007-03" db="UniProtKB">
        <authorList>
            <person name="Lubec G."/>
            <person name="Vishwanath V."/>
        </authorList>
    </citation>
    <scope>PROTEIN SEQUENCE OF 143-156; 174-193 AND 222-240</scope>
    <scope>IDENTIFICATION BY MASS SPECTROMETRY</scope>
    <source>
        <tissue>Brain</tissue>
        <tissue>Cajal-Retzius cell</tissue>
    </source>
</reference>
<reference key="13">
    <citation type="submission" date="1992-11" db="EMBL/GenBank/DDBJ databases">
        <authorList>
            <person name="Bhat K.S."/>
        </authorList>
    </citation>
    <scope>NUCLEOTIDE SEQUENCE [MRNA] OF 328-436</scope>
</reference>
<reference key="14">
    <citation type="journal article" date="1992" name="Electrophoresis">
        <title>Microsequences of 145 proteins recorded in the two-dimensional gel protein database of normal human epidermal keratinocytes.</title>
        <authorList>
            <person name="Rasmussen H.H."/>
            <person name="van Damme J."/>
            <person name="Puype M."/>
            <person name="Gesser B."/>
            <person name="Celis J.E."/>
            <person name="Vandekerckhove J."/>
        </authorList>
    </citation>
    <scope>PROTEIN SEQUENCE OF 349-361</scope>
    <source>
        <tissue>Keratinocyte</tissue>
    </source>
</reference>
<reference key="15">
    <citation type="journal article" date="1995" name="Hum. Mol. Genet.">
        <title>Expression patterns of two human genes coding for different rab GDP-dissociation inhibitors (GDIs), extremely conserved proteins involved in cellular transport.</title>
        <authorList>
            <person name="Bachner D."/>
            <person name="Sedlacek Z."/>
            <person name="Korn B."/>
            <person name="Hameister H."/>
            <person name="Poustka A."/>
        </authorList>
    </citation>
    <scope>TISSUE SPECIFICITY</scope>
</reference>
<reference key="16">
    <citation type="journal article" date="2002" name="Mol. Cell. Biol.">
        <title>The hematopoiesis-specific GTP-binding protein RhoH is GTPase deficient and modulates activities of other Rho GTPases by an inhibitory function.</title>
        <authorList>
            <person name="Li X."/>
            <person name="Bu X."/>
            <person name="Lu B."/>
            <person name="Avraham H."/>
            <person name="Flavell R.A."/>
            <person name="Lim B."/>
        </authorList>
    </citation>
    <scope>INTERACTION WITH RHOH</scope>
</reference>
<reference key="17">
    <citation type="journal article" date="2009" name="Biochem. J.">
        <title>GDI-1 preferably interacts with Rab10 in insulin-stimulated GLUT4 translocation.</title>
        <authorList>
            <person name="Chen Y."/>
            <person name="Deng Y."/>
            <person name="Zhang J."/>
            <person name="Yang L."/>
            <person name="Xie X."/>
            <person name="Xu T."/>
        </authorList>
    </citation>
    <scope>INTERACTION WITH RAB10</scope>
    <scope>SUBCELLULAR LOCATION</scope>
</reference>
<reference key="18">
    <citation type="journal article" date="2011" name="BMC Syst. Biol.">
        <title>Initial characterization of the human central proteome.</title>
        <authorList>
            <person name="Burkard T.R."/>
            <person name="Planyavsky M."/>
            <person name="Kaupe I."/>
            <person name="Breitwieser F.P."/>
            <person name="Buerckstuemmer T."/>
            <person name="Bennett K.L."/>
            <person name="Superti-Furga G."/>
            <person name="Colinge J."/>
        </authorList>
    </citation>
    <scope>IDENTIFICATION BY MASS SPECTROMETRY [LARGE SCALE ANALYSIS]</scope>
</reference>
<reference key="19">
    <citation type="journal article" date="2013" name="Mol. Membr. Biol.">
        <title>Rab1a and Rab5a preferentially bind to binary lipid compositions with higher stored curvature elastic energy.</title>
        <authorList>
            <person name="Kirsten M.L."/>
            <person name="Baron R.A."/>
            <person name="Seabra M.C."/>
            <person name="Ces O."/>
        </authorList>
    </citation>
    <scope>INTERACTION WITH RAB1A AND RAB5A</scope>
    <scope>FUNCTION</scope>
</reference>
<reference key="20">
    <citation type="journal article" date="2014" name="J. Proteomics">
        <title>An enzyme assisted RP-RPLC approach for in-depth analysis of human liver phosphoproteome.</title>
        <authorList>
            <person name="Bian Y."/>
            <person name="Song C."/>
            <person name="Cheng K."/>
            <person name="Dong M."/>
            <person name="Wang F."/>
            <person name="Huang J."/>
            <person name="Sun D."/>
            <person name="Wang L."/>
            <person name="Ye M."/>
            <person name="Zou H."/>
        </authorList>
    </citation>
    <scope>IDENTIFICATION BY MASS SPECTROMETRY [LARGE SCALE ANALYSIS]</scope>
    <source>
        <tissue>Liver</tissue>
    </source>
</reference>
<reference key="21">
    <citation type="journal article" date="2016" name="Elife">
        <title>Phosphoproteomics reveals that Parkinson's disease kinase LRRK2 regulates a subset of Rab GTPases.</title>
        <authorList>
            <person name="Steger M."/>
            <person name="Tonelli F."/>
            <person name="Ito G."/>
            <person name="Davies P."/>
            <person name="Trost M."/>
            <person name="Vetter M."/>
            <person name="Wachter S."/>
            <person name="Lorentzen E."/>
            <person name="Duddy G."/>
            <person name="Wilson S."/>
            <person name="Baptista M.A."/>
            <person name="Fiske B.K."/>
            <person name="Fell M.J."/>
            <person name="Morrow J.A."/>
            <person name="Reith A.D."/>
            <person name="Alessi D.R."/>
            <person name="Mann M."/>
        </authorList>
    </citation>
    <scope>IDENTIFICATION BY MASS SPECTROMETRY</scope>
    <scope>INTERACTION WITH RAB8A; RAB10 AND RAB12</scope>
</reference>
<reference key="22">
    <citation type="journal article" date="2017" name="Elife">
        <title>Systematic proteomic analysis of LRRK2-mediated Rab GTPase phosphorylation establishes a connection to ciliogenesis.</title>
        <authorList>
            <person name="Steger M."/>
            <person name="Diez F."/>
            <person name="Dhekne H.S."/>
            <person name="Lis P."/>
            <person name="Nirujogi R.S."/>
            <person name="Karayel O."/>
            <person name="Tonelli F."/>
            <person name="Martinez T.N."/>
            <person name="Lorentzen E."/>
            <person name="Pfeffer S.R."/>
            <person name="Alessi D.R."/>
            <person name="Mann M."/>
        </authorList>
    </citation>
    <scope>IDENTIFICATION BY MASS SPECTROMETRY</scope>
    <scope>INTERACTION WITH RAB3A; RAB5A; RAB5B; RAB5C; RAB8A; RAB8B; RAB10; RAB35 AND RAB43</scope>
</reference>
<reference key="23">
    <citation type="journal article" date="1998" name="Nat. Genet.">
        <title>Mutations in GDI1 are responsible for X-linked non-specific mental retardation.</title>
        <authorList>
            <person name="D'Adamo P."/>
            <person name="Menegon A."/>
            <person name="Lo Nigro C."/>
            <person name="Grasso M."/>
            <person name="Gulisano M."/>
            <person name="Tamanini F."/>
            <person name="Bienvenu T."/>
            <person name="Gedeon A.K."/>
            <person name="Oostra B."/>
            <person name="Wu S.-K."/>
            <person name="Tandon A."/>
            <person name="Valtorta F."/>
            <person name="Balch W.E."/>
            <person name="Chelly J."/>
            <person name="Toniolo D."/>
        </authorList>
    </citation>
    <scope>VARIANT XLID41 PRO-92</scope>
</reference>
<reference key="24">
    <citation type="journal article" date="1998" name="Hum. Mol. Genet.">
        <title>Non-specific X-linked semidominant mental retardation by mutations in a Rab GDP-dissociation inhibitor.</title>
        <authorList>
            <person name="Bienvenu T."/>
            <person name="Des Portes V."/>
            <person name="Saint Martin A."/>
            <person name="McDonell N."/>
            <person name="Billuart P."/>
            <person name="Carrie A."/>
            <person name="Vinet M.-C."/>
            <person name="Couvert P."/>
            <person name="Toniolo D."/>
            <person name="Ropers H.-H."/>
            <person name="Moraine C."/>
            <person name="van Bokhoven H."/>
            <person name="Fryns J.-P."/>
            <person name="Kahn A."/>
            <person name="Beldjord C."/>
            <person name="Chelly J."/>
        </authorList>
    </citation>
    <scope>VARIANT XLID41 PRO-423</scope>
</reference>
<keyword id="KW-0963">Cytoplasm</keyword>
<keyword id="KW-0903">Direct protein sequencing</keyword>
<keyword id="KW-0225">Disease variant</keyword>
<keyword id="KW-0333">Golgi apparatus</keyword>
<keyword id="KW-0343">GTPase activation</keyword>
<keyword id="KW-0991">Intellectual disability</keyword>
<keyword id="KW-1267">Proteomics identification</keyword>
<keyword id="KW-1185">Reference proteome</keyword>
<feature type="chain" id="PRO_0000056671" description="Rab GDP dissociation inhibitor alpha">
    <location>
        <begin position="1"/>
        <end position="447"/>
    </location>
</feature>
<feature type="sequence variant" id="VAR_008130" description="In XLID41; causes reduced binding and recycling of RAB3A; dbSNP:rs121434607." evidence="7">
    <original>L</original>
    <variation>P</variation>
    <location>
        <position position="92"/>
    </location>
</feature>
<feature type="sequence variant" id="VAR_008131" description="In XLID41; dbSNP:rs121434609." evidence="8">
    <original>R</original>
    <variation>P</variation>
    <location>
        <position position="423"/>
    </location>
</feature>
<feature type="sequence conflict" description="In Ref. 2; BAA08078." evidence="9" ref="2">
    <original>D</original>
    <variation>G</variation>
    <location>
        <position position="34"/>
    </location>
</feature>
<feature type="sequence conflict" description="In Ref. 2; BAA08078." evidence="9" ref="2">
    <original>N</original>
    <variation>K</variation>
    <location>
        <position position="36"/>
    </location>
</feature>
<feature type="sequence conflict" description="In Ref. 2; BAA08078." evidence="9" ref="2">
    <original>NFD</original>
    <variation>GTY</variation>
    <location>
        <begin position="149"/>
        <end position="151"/>
    </location>
</feature>
<feature type="sequence conflict" description="In Ref. 13; AAC15851." evidence="9" ref="13">
    <original>G</original>
    <variation>V</variation>
    <location>
        <position position="347"/>
    </location>
</feature>
<feature type="sequence conflict" description="In Ref. 13; AAC15851." evidence="9" ref="13">
    <original>H</original>
    <variation>Q</variation>
    <location>
        <position position="409"/>
    </location>
</feature>
<feature type="sequence conflict" description="In Ref. 13; AAC15851." evidence="9" ref="13">
    <original>D</original>
    <variation>G</variation>
    <location>
        <position position="416"/>
    </location>
</feature>
<feature type="sequence conflict" description="In Ref. 2; BAA08078." evidence="9" ref="2">
    <original>F</original>
    <variation>S</variation>
    <location>
        <position position="442"/>
    </location>
</feature>
<name>GDIA_HUMAN</name>
<dbReference type="EMBL" id="X79353">
    <property type="protein sequence ID" value="CAA55908.1"/>
    <property type="molecule type" value="mRNA"/>
</dbReference>
<dbReference type="EMBL" id="X79354">
    <property type="protein sequence ID" value="CAA55909.1"/>
    <property type="molecule type" value="Genomic_DNA"/>
</dbReference>
<dbReference type="EMBL" id="X79355">
    <property type="protein sequence ID" value="CAA55909.1"/>
    <property type="status" value="JOINED"/>
    <property type="molecule type" value="Genomic_DNA"/>
</dbReference>
<dbReference type="EMBL" id="X79356">
    <property type="protein sequence ID" value="CAA55909.1"/>
    <property type="status" value="JOINED"/>
    <property type="molecule type" value="Genomic_DNA"/>
</dbReference>
<dbReference type="EMBL" id="X79357">
    <property type="protein sequence ID" value="CAA55909.1"/>
    <property type="status" value="JOINED"/>
    <property type="molecule type" value="Genomic_DNA"/>
</dbReference>
<dbReference type="EMBL" id="X79358">
    <property type="protein sequence ID" value="CAA55909.1"/>
    <property type="status" value="JOINED"/>
    <property type="molecule type" value="Genomic_DNA"/>
</dbReference>
<dbReference type="EMBL" id="X79359">
    <property type="protein sequence ID" value="CAA55909.1"/>
    <property type="status" value="JOINED"/>
    <property type="molecule type" value="Genomic_DNA"/>
</dbReference>
<dbReference type="EMBL" id="X79360">
    <property type="protein sequence ID" value="CAA55909.1"/>
    <property type="status" value="JOINED"/>
    <property type="molecule type" value="Genomic_DNA"/>
</dbReference>
<dbReference type="EMBL" id="X79364">
    <property type="protein sequence ID" value="CAA55909.1"/>
    <property type="status" value="JOINED"/>
    <property type="molecule type" value="Genomic_DNA"/>
</dbReference>
<dbReference type="EMBL" id="X79361">
    <property type="protein sequence ID" value="CAA55909.1"/>
    <property type="status" value="JOINED"/>
    <property type="molecule type" value="Genomic_DNA"/>
</dbReference>
<dbReference type="EMBL" id="X79362">
    <property type="protein sequence ID" value="CAA55909.1"/>
    <property type="status" value="JOINED"/>
    <property type="molecule type" value="Genomic_DNA"/>
</dbReference>
<dbReference type="EMBL" id="X79363">
    <property type="protein sequence ID" value="CAA55909.1"/>
    <property type="status" value="JOINED"/>
    <property type="molecule type" value="Genomic_DNA"/>
</dbReference>
<dbReference type="EMBL" id="D45021">
    <property type="protein sequence ID" value="BAA08078.1"/>
    <property type="molecule type" value="mRNA"/>
</dbReference>
<dbReference type="EMBL" id="L44140">
    <property type="protein sequence ID" value="AAA92648.1"/>
    <property type="molecule type" value="Genomic_DNA"/>
</dbReference>
<dbReference type="EMBL" id="AF400433">
    <property type="protein sequence ID" value="AAK92482.1"/>
    <property type="molecule type" value="mRNA"/>
</dbReference>
<dbReference type="EMBL" id="AB101741">
    <property type="protein sequence ID" value="BAC80330.1"/>
    <property type="molecule type" value="Genomic_DNA"/>
</dbReference>
<dbReference type="EMBL" id="AB101742">
    <property type="protein sequence ID" value="BAC80331.1"/>
    <property type="molecule type" value="Genomic_DNA"/>
</dbReference>
<dbReference type="EMBL" id="AB101743">
    <property type="protein sequence ID" value="BAC80332.1"/>
    <property type="molecule type" value="Genomic_DNA"/>
</dbReference>
<dbReference type="EMBL" id="AB101744">
    <property type="protein sequence ID" value="BAC80333.1"/>
    <property type="molecule type" value="Genomic_DNA"/>
</dbReference>
<dbReference type="EMBL" id="AB101745">
    <property type="protein sequence ID" value="BAC80334.1"/>
    <property type="molecule type" value="Genomic_DNA"/>
</dbReference>
<dbReference type="EMBL" id="AB101746">
    <property type="protein sequence ID" value="BAC80335.1"/>
    <property type="molecule type" value="Genomic_DNA"/>
</dbReference>
<dbReference type="EMBL" id="AB101747">
    <property type="protein sequence ID" value="BAC80336.1"/>
    <property type="molecule type" value="Genomic_DNA"/>
</dbReference>
<dbReference type="EMBL" id="AB101748">
    <property type="protein sequence ID" value="BAC80337.1"/>
    <property type="molecule type" value="Genomic_DNA"/>
</dbReference>
<dbReference type="EMBL" id="AB101749">
    <property type="protein sequence ID" value="BAC80338.1"/>
    <property type="molecule type" value="Genomic_DNA"/>
</dbReference>
<dbReference type="EMBL" id="AB101750">
    <property type="protein sequence ID" value="BAC80339.1"/>
    <property type="molecule type" value="Genomic_DNA"/>
</dbReference>
<dbReference type="EMBL" id="AB101751">
    <property type="protein sequence ID" value="BAC80340.1"/>
    <property type="molecule type" value="Genomic_DNA"/>
</dbReference>
<dbReference type="EMBL" id="AB101752">
    <property type="protein sequence ID" value="BAC80341.1"/>
    <property type="molecule type" value="Genomic_DNA"/>
</dbReference>
<dbReference type="EMBL" id="AB101753">
    <property type="protein sequence ID" value="BAC80342.1"/>
    <property type="molecule type" value="Genomic_DNA"/>
</dbReference>
<dbReference type="EMBL" id="AB101754">
    <property type="protein sequence ID" value="BAC80343.1"/>
    <property type="molecule type" value="Genomic_DNA"/>
</dbReference>
<dbReference type="EMBL" id="AB101755">
    <property type="protein sequence ID" value="BAC80344.1"/>
    <property type="molecule type" value="Genomic_DNA"/>
</dbReference>
<dbReference type="EMBL" id="AB101756">
    <property type="protein sequence ID" value="BAC80345.1"/>
    <property type="molecule type" value="Genomic_DNA"/>
</dbReference>
<dbReference type="EMBL" id="AB101757">
    <property type="protein sequence ID" value="BAC80346.1"/>
    <property type="molecule type" value="Genomic_DNA"/>
</dbReference>
<dbReference type="EMBL" id="AB101758">
    <property type="protein sequence ID" value="BAC80347.1"/>
    <property type="molecule type" value="Genomic_DNA"/>
</dbReference>
<dbReference type="EMBL" id="AB101759">
    <property type="protein sequence ID" value="BAC80348.1"/>
    <property type="molecule type" value="Genomic_DNA"/>
</dbReference>
<dbReference type="EMBL" id="AB101760">
    <property type="protein sequence ID" value="BAC80349.1"/>
    <property type="molecule type" value="Genomic_DNA"/>
</dbReference>
<dbReference type="EMBL" id="AB101771">
    <property type="protein sequence ID" value="BAC80360.1"/>
    <property type="molecule type" value="Genomic_DNA"/>
</dbReference>
<dbReference type="EMBL" id="AB101772">
    <property type="protein sequence ID" value="BAC80361.1"/>
    <property type="molecule type" value="Genomic_DNA"/>
</dbReference>
<dbReference type="EMBL" id="AB101773">
    <property type="protein sequence ID" value="BAC80362.1"/>
    <property type="molecule type" value="Genomic_DNA"/>
</dbReference>
<dbReference type="EMBL" id="AB101774">
    <property type="protein sequence ID" value="BAC80363.1"/>
    <property type="molecule type" value="Genomic_DNA"/>
</dbReference>
<dbReference type="EMBL" id="AB101775">
    <property type="protein sequence ID" value="BAC80364.1"/>
    <property type="molecule type" value="Genomic_DNA"/>
</dbReference>
<dbReference type="EMBL" id="AB101776">
    <property type="protein sequence ID" value="BAC80365.1"/>
    <property type="molecule type" value="Genomic_DNA"/>
</dbReference>
<dbReference type="EMBL" id="AB101777">
    <property type="protein sequence ID" value="BAC80366.1"/>
    <property type="molecule type" value="Genomic_DNA"/>
</dbReference>
<dbReference type="EMBL" id="AB101778">
    <property type="protein sequence ID" value="BAC80367.1"/>
    <property type="molecule type" value="Genomic_DNA"/>
</dbReference>
<dbReference type="EMBL" id="AB101779">
    <property type="protein sequence ID" value="BAC80368.1"/>
    <property type="molecule type" value="Genomic_DNA"/>
</dbReference>
<dbReference type="EMBL" id="AB101780">
    <property type="protein sequence ID" value="BAC80369.1"/>
    <property type="molecule type" value="Genomic_DNA"/>
</dbReference>
<dbReference type="EMBL" id="AB101781">
    <property type="protein sequence ID" value="BAC80370.1"/>
    <property type="molecule type" value="Genomic_DNA"/>
</dbReference>
<dbReference type="EMBL" id="AB101782">
    <property type="protein sequence ID" value="BAC80371.1"/>
    <property type="molecule type" value="Genomic_DNA"/>
</dbReference>
<dbReference type="EMBL" id="AB101783">
    <property type="protein sequence ID" value="BAC80372.1"/>
    <property type="molecule type" value="Genomic_DNA"/>
</dbReference>
<dbReference type="EMBL" id="AB101784">
    <property type="protein sequence ID" value="BAC80373.1"/>
    <property type="molecule type" value="Genomic_DNA"/>
</dbReference>
<dbReference type="EMBL" id="AB101785">
    <property type="protein sequence ID" value="BAC80374.1"/>
    <property type="molecule type" value="Genomic_DNA"/>
</dbReference>
<dbReference type="EMBL" id="AB101786">
    <property type="protein sequence ID" value="BAC80375.1"/>
    <property type="molecule type" value="Genomic_DNA"/>
</dbReference>
<dbReference type="EMBL" id="AB101787">
    <property type="protein sequence ID" value="BAC80376.1"/>
    <property type="molecule type" value="Genomic_DNA"/>
</dbReference>
<dbReference type="EMBL" id="AB101788">
    <property type="protein sequence ID" value="BAC80377.1"/>
    <property type="molecule type" value="Genomic_DNA"/>
</dbReference>
<dbReference type="EMBL" id="AB101789">
    <property type="protein sequence ID" value="BAC80378.1"/>
    <property type="molecule type" value="Genomic_DNA"/>
</dbReference>
<dbReference type="EMBL" id="AB101790">
    <property type="protein sequence ID" value="BAC80379.1"/>
    <property type="molecule type" value="Genomic_DNA"/>
</dbReference>
<dbReference type="EMBL" id="AB101801">
    <property type="protein sequence ID" value="BAC80390.1"/>
    <property type="molecule type" value="Genomic_DNA"/>
</dbReference>
<dbReference type="EMBL" id="AB101802">
    <property type="protein sequence ID" value="BAC80391.1"/>
    <property type="molecule type" value="Genomic_DNA"/>
</dbReference>
<dbReference type="EMBL" id="AB101803">
    <property type="protein sequence ID" value="BAC80392.1"/>
    <property type="molecule type" value="Genomic_DNA"/>
</dbReference>
<dbReference type="EMBL" id="AB101804">
    <property type="protein sequence ID" value="BAC80393.1"/>
    <property type="molecule type" value="Genomic_DNA"/>
</dbReference>
<dbReference type="EMBL" id="AB101805">
    <property type="protein sequence ID" value="BAC80394.1"/>
    <property type="molecule type" value="Genomic_DNA"/>
</dbReference>
<dbReference type="EMBL" id="AB101806">
    <property type="protein sequence ID" value="BAC80395.1"/>
    <property type="molecule type" value="Genomic_DNA"/>
</dbReference>
<dbReference type="EMBL" id="AB101807">
    <property type="protein sequence ID" value="BAC80396.1"/>
    <property type="molecule type" value="Genomic_DNA"/>
</dbReference>
<dbReference type="EMBL" id="AB101808">
    <property type="protein sequence ID" value="BAC80397.1"/>
    <property type="molecule type" value="Genomic_DNA"/>
</dbReference>
<dbReference type="EMBL" id="AB101809">
    <property type="protein sequence ID" value="BAC80398.1"/>
    <property type="molecule type" value="Genomic_DNA"/>
</dbReference>
<dbReference type="EMBL" id="AB101810">
    <property type="protein sequence ID" value="BAC80399.1"/>
    <property type="molecule type" value="Genomic_DNA"/>
</dbReference>
<dbReference type="EMBL" id="AB101811">
    <property type="protein sequence ID" value="BAC80400.1"/>
    <property type="molecule type" value="Genomic_DNA"/>
</dbReference>
<dbReference type="EMBL" id="AB101812">
    <property type="protein sequence ID" value="BAC80401.1"/>
    <property type="molecule type" value="Genomic_DNA"/>
</dbReference>
<dbReference type="EMBL" id="AB101813">
    <property type="protein sequence ID" value="BAC80402.1"/>
    <property type="molecule type" value="Genomic_DNA"/>
</dbReference>
<dbReference type="EMBL" id="AB101814">
    <property type="protein sequence ID" value="BAC80403.1"/>
    <property type="molecule type" value="Genomic_DNA"/>
</dbReference>
<dbReference type="EMBL" id="AB101815">
    <property type="protein sequence ID" value="BAC80404.1"/>
    <property type="molecule type" value="Genomic_DNA"/>
</dbReference>
<dbReference type="EMBL" id="AB101816">
    <property type="protein sequence ID" value="BAC80405.1"/>
    <property type="molecule type" value="Genomic_DNA"/>
</dbReference>
<dbReference type="EMBL" id="AB101817">
    <property type="protein sequence ID" value="BAC80406.1"/>
    <property type="molecule type" value="Genomic_DNA"/>
</dbReference>
<dbReference type="EMBL" id="AB101818">
    <property type="protein sequence ID" value="BAC80407.1"/>
    <property type="molecule type" value="Genomic_DNA"/>
</dbReference>
<dbReference type="EMBL" id="AB101819">
    <property type="protein sequence ID" value="BAC80408.1"/>
    <property type="molecule type" value="Genomic_DNA"/>
</dbReference>
<dbReference type="EMBL" id="AB101820">
    <property type="protein sequence ID" value="BAC80409.1"/>
    <property type="molecule type" value="Genomic_DNA"/>
</dbReference>
<dbReference type="EMBL" id="AB101831">
    <property type="protein sequence ID" value="BAC80420.1"/>
    <property type="molecule type" value="Genomic_DNA"/>
</dbReference>
<dbReference type="EMBL" id="AB101832">
    <property type="protein sequence ID" value="BAC80421.1"/>
    <property type="molecule type" value="Genomic_DNA"/>
</dbReference>
<dbReference type="EMBL" id="AB101833">
    <property type="protein sequence ID" value="BAC80422.1"/>
    <property type="molecule type" value="Genomic_DNA"/>
</dbReference>
<dbReference type="EMBL" id="AB101834">
    <property type="protein sequence ID" value="BAC80423.1"/>
    <property type="molecule type" value="Genomic_DNA"/>
</dbReference>
<dbReference type="EMBL" id="AB101835">
    <property type="protein sequence ID" value="BAC80424.1"/>
    <property type="molecule type" value="Genomic_DNA"/>
</dbReference>
<dbReference type="EMBL" id="AB101836">
    <property type="protein sequence ID" value="BAC80425.1"/>
    <property type="molecule type" value="Genomic_DNA"/>
</dbReference>
<dbReference type="EMBL" id="AB101837">
    <property type="protein sequence ID" value="BAC80426.1"/>
    <property type="molecule type" value="Genomic_DNA"/>
</dbReference>
<dbReference type="EMBL" id="AB101838">
    <property type="protein sequence ID" value="BAC80427.1"/>
    <property type="molecule type" value="Genomic_DNA"/>
</dbReference>
<dbReference type="EMBL" id="AB101839">
    <property type="protein sequence ID" value="BAC80428.1"/>
    <property type="molecule type" value="Genomic_DNA"/>
</dbReference>
<dbReference type="EMBL" id="AB101840">
    <property type="protein sequence ID" value="BAC80429.1"/>
    <property type="molecule type" value="Genomic_DNA"/>
</dbReference>
<dbReference type="EMBL" id="AB101841">
    <property type="protein sequence ID" value="BAC80430.1"/>
    <property type="molecule type" value="Genomic_DNA"/>
</dbReference>
<dbReference type="EMBL" id="AB101842">
    <property type="protein sequence ID" value="BAC80431.1"/>
    <property type="molecule type" value="Genomic_DNA"/>
</dbReference>
<dbReference type="EMBL" id="AB101843">
    <property type="protein sequence ID" value="BAC80432.1"/>
    <property type="molecule type" value="Genomic_DNA"/>
</dbReference>
<dbReference type="EMBL" id="AB101844">
    <property type="protein sequence ID" value="BAC80433.1"/>
    <property type="molecule type" value="Genomic_DNA"/>
</dbReference>
<dbReference type="EMBL" id="AB101845">
    <property type="protein sequence ID" value="BAC80434.1"/>
    <property type="molecule type" value="Genomic_DNA"/>
</dbReference>
<dbReference type="EMBL" id="AB101846">
    <property type="protein sequence ID" value="BAC80435.1"/>
    <property type="molecule type" value="Genomic_DNA"/>
</dbReference>
<dbReference type="EMBL" id="AB101847">
    <property type="protein sequence ID" value="BAC80436.1"/>
    <property type="molecule type" value="Genomic_DNA"/>
</dbReference>
<dbReference type="EMBL" id="AB101848">
    <property type="protein sequence ID" value="BAC80437.1"/>
    <property type="molecule type" value="Genomic_DNA"/>
</dbReference>
<dbReference type="EMBL" id="AB101849">
    <property type="protein sequence ID" value="BAC80438.1"/>
    <property type="molecule type" value="Genomic_DNA"/>
</dbReference>
<dbReference type="EMBL" id="AB101850">
    <property type="protein sequence ID" value="BAC80439.1"/>
    <property type="molecule type" value="Genomic_DNA"/>
</dbReference>
<dbReference type="EMBL" id="AB102647">
    <property type="protein sequence ID" value="BAC81116.1"/>
    <property type="molecule type" value="mRNA"/>
</dbReference>
<dbReference type="EMBL" id="CR542258">
    <property type="protein sequence ID" value="CAG47054.1"/>
    <property type="molecule type" value="mRNA"/>
</dbReference>
<dbReference type="EMBL" id="CR542276">
    <property type="protein sequence ID" value="CAG47072.1"/>
    <property type="molecule type" value="mRNA"/>
</dbReference>
<dbReference type="EMBL" id="BT019884">
    <property type="protein sequence ID" value="AAV38687.1"/>
    <property type="molecule type" value="mRNA"/>
</dbReference>
<dbReference type="EMBL" id="BX936385">
    <property type="status" value="NOT_ANNOTATED_CDS"/>
    <property type="molecule type" value="Genomic_DNA"/>
</dbReference>
<dbReference type="EMBL" id="CH471172">
    <property type="protein sequence ID" value="EAW72710.1"/>
    <property type="molecule type" value="Genomic_DNA"/>
</dbReference>
<dbReference type="EMBL" id="BC000317">
    <property type="protein sequence ID" value="AAH00317.1"/>
    <property type="molecule type" value="mRNA"/>
</dbReference>
<dbReference type="EMBL" id="BC012201">
    <property type="protein sequence ID" value="AAH12201.1"/>
    <property type="molecule type" value="mRNA"/>
</dbReference>
<dbReference type="EMBL" id="U14623">
    <property type="protein sequence ID" value="AAA21558.1"/>
    <property type="molecule type" value="Genomic_DNA"/>
</dbReference>
<dbReference type="EMBL" id="L05086">
    <property type="protein sequence ID" value="AAC15851.1"/>
    <property type="molecule type" value="mRNA"/>
</dbReference>
<dbReference type="CCDS" id="CCDS35452.1"/>
<dbReference type="PIR" id="I37082">
    <property type="entry name" value="I37082"/>
</dbReference>
<dbReference type="RefSeq" id="NP_001484.1">
    <property type="nucleotide sequence ID" value="NM_001493.3"/>
</dbReference>
<dbReference type="SMR" id="P31150"/>
<dbReference type="BioGRID" id="108932">
    <property type="interactions" value="141"/>
</dbReference>
<dbReference type="FunCoup" id="P31150">
    <property type="interactions" value="1644"/>
</dbReference>
<dbReference type="IntAct" id="P31150">
    <property type="interactions" value="85"/>
</dbReference>
<dbReference type="MINT" id="P31150"/>
<dbReference type="STRING" id="9606.ENSP00000394071"/>
<dbReference type="GlyGen" id="P31150">
    <property type="glycosylation" value="1 site, 1 O-linked glycan (1 site)"/>
</dbReference>
<dbReference type="iPTMnet" id="P31150"/>
<dbReference type="MetOSite" id="P31150"/>
<dbReference type="PhosphoSitePlus" id="P31150"/>
<dbReference type="SwissPalm" id="P31150"/>
<dbReference type="BioMuta" id="GDI1"/>
<dbReference type="DMDM" id="1707886"/>
<dbReference type="OGP" id="P31150"/>
<dbReference type="REPRODUCTION-2DPAGE" id="IPI00010154"/>
<dbReference type="jPOST" id="P31150"/>
<dbReference type="MassIVE" id="P31150"/>
<dbReference type="PaxDb" id="9606-ENSP00000394071"/>
<dbReference type="PeptideAtlas" id="P31150"/>
<dbReference type="PRIDE" id="P31150"/>
<dbReference type="ProteomicsDB" id="54760"/>
<dbReference type="Pumba" id="P31150"/>
<dbReference type="Antibodypedia" id="4564">
    <property type="antibodies" value="400 antibodies from 33 providers"/>
</dbReference>
<dbReference type="DNASU" id="2664"/>
<dbReference type="Ensembl" id="ENST00000447750.7">
    <property type="protein sequence ID" value="ENSP00000394071.2"/>
    <property type="gene ID" value="ENSG00000203879.12"/>
</dbReference>
<dbReference type="GeneID" id="2664"/>
<dbReference type="KEGG" id="hsa:2664"/>
<dbReference type="MANE-Select" id="ENST00000447750.7">
    <property type="protein sequence ID" value="ENSP00000394071.2"/>
    <property type="RefSeq nucleotide sequence ID" value="NM_001493.3"/>
    <property type="RefSeq protein sequence ID" value="NP_001484.1"/>
</dbReference>
<dbReference type="UCSC" id="uc004fli.5">
    <property type="organism name" value="human"/>
</dbReference>
<dbReference type="AGR" id="HGNC:4226"/>
<dbReference type="CTD" id="2664"/>
<dbReference type="DisGeNET" id="2664"/>
<dbReference type="GeneCards" id="GDI1"/>
<dbReference type="HGNC" id="HGNC:4226">
    <property type="gene designation" value="GDI1"/>
</dbReference>
<dbReference type="HPA" id="ENSG00000203879">
    <property type="expression patterns" value="Tissue enhanced (brain)"/>
</dbReference>
<dbReference type="MalaCards" id="GDI1"/>
<dbReference type="MIM" id="300104">
    <property type="type" value="gene"/>
</dbReference>
<dbReference type="MIM" id="300849">
    <property type="type" value="phenotype"/>
</dbReference>
<dbReference type="neXtProt" id="NX_P31150"/>
<dbReference type="OpenTargets" id="ENSG00000203879"/>
<dbReference type="Orphanet" id="777">
    <property type="disease" value="X-linked non-syndromic intellectual disability"/>
</dbReference>
<dbReference type="PharmGKB" id="PA28641"/>
<dbReference type="VEuPathDB" id="HostDB:ENSG00000203879"/>
<dbReference type="eggNOG" id="KOG1439">
    <property type="taxonomic scope" value="Eukaryota"/>
</dbReference>
<dbReference type="GeneTree" id="ENSGT00950000182994"/>
<dbReference type="HOGENOM" id="CLU_021695_0_0_1"/>
<dbReference type="InParanoid" id="P31150"/>
<dbReference type="OMA" id="GRICKVP"/>
<dbReference type="OrthoDB" id="9446342at2759"/>
<dbReference type="PAN-GO" id="P31150">
    <property type="GO annotations" value="3 GO annotations based on evolutionary models"/>
</dbReference>
<dbReference type="PhylomeDB" id="P31150"/>
<dbReference type="TreeFam" id="TF300449"/>
<dbReference type="PathwayCommons" id="P31150"/>
<dbReference type="Reactome" id="R-HSA-8876198">
    <property type="pathway name" value="RAB GEFs exchange GTP for GDP on RABs"/>
</dbReference>
<dbReference type="SignaLink" id="P31150"/>
<dbReference type="BioGRID-ORCS" id="2664">
    <property type="hits" value="11 hits in 781 CRISPR screens"/>
</dbReference>
<dbReference type="CD-CODE" id="FB4E32DD">
    <property type="entry name" value="Presynaptic clusters and postsynaptic densities"/>
</dbReference>
<dbReference type="ChiTaRS" id="GDI1">
    <property type="organism name" value="human"/>
</dbReference>
<dbReference type="GeneWiki" id="GDI1"/>
<dbReference type="GenomeRNAi" id="2664"/>
<dbReference type="Pharos" id="P31150">
    <property type="development level" value="Tbio"/>
</dbReference>
<dbReference type="PRO" id="PR:P31150"/>
<dbReference type="Proteomes" id="UP000005640">
    <property type="component" value="Chromosome X"/>
</dbReference>
<dbReference type="RNAct" id="P31150">
    <property type="molecule type" value="protein"/>
</dbReference>
<dbReference type="Bgee" id="ENSG00000203879">
    <property type="expression patterns" value="Expressed in right hemisphere of cerebellum and 207 other cell types or tissues"/>
</dbReference>
<dbReference type="ExpressionAtlas" id="P31150">
    <property type="expression patterns" value="baseline and differential"/>
</dbReference>
<dbReference type="GO" id="GO:0030424">
    <property type="term" value="C:axon"/>
    <property type="evidence" value="ECO:0007669"/>
    <property type="project" value="Ensembl"/>
</dbReference>
<dbReference type="GO" id="GO:0005737">
    <property type="term" value="C:cytoplasm"/>
    <property type="evidence" value="ECO:0000314"/>
    <property type="project" value="LIFEdb"/>
</dbReference>
<dbReference type="GO" id="GO:0005829">
    <property type="term" value="C:cytosol"/>
    <property type="evidence" value="ECO:0000318"/>
    <property type="project" value="GO_Central"/>
</dbReference>
<dbReference type="GO" id="GO:0005783">
    <property type="term" value="C:endoplasmic reticulum"/>
    <property type="evidence" value="ECO:0000314"/>
    <property type="project" value="UniProt"/>
</dbReference>
<dbReference type="GO" id="GO:0005794">
    <property type="term" value="C:Golgi apparatus"/>
    <property type="evidence" value="ECO:0007669"/>
    <property type="project" value="UniProtKB-SubCell"/>
</dbReference>
<dbReference type="GO" id="GO:0030496">
    <property type="term" value="C:midbody"/>
    <property type="evidence" value="ECO:0000314"/>
    <property type="project" value="UniProtKB"/>
</dbReference>
<dbReference type="GO" id="GO:0043209">
    <property type="term" value="C:myelin sheath"/>
    <property type="evidence" value="ECO:0007669"/>
    <property type="project" value="Ensembl"/>
</dbReference>
<dbReference type="GO" id="GO:0043025">
    <property type="term" value="C:neuronal cell body"/>
    <property type="evidence" value="ECO:0007669"/>
    <property type="project" value="Ensembl"/>
</dbReference>
<dbReference type="GO" id="GO:0099523">
    <property type="term" value="C:presynaptic cytosol"/>
    <property type="evidence" value="ECO:0007669"/>
    <property type="project" value="Ensembl"/>
</dbReference>
<dbReference type="GO" id="GO:0032991">
    <property type="term" value="C:protein-containing complex"/>
    <property type="evidence" value="ECO:0007669"/>
    <property type="project" value="Ensembl"/>
</dbReference>
<dbReference type="GO" id="GO:0005092">
    <property type="term" value="F:GDP-dissociation inhibitor activity"/>
    <property type="evidence" value="ECO:0000314"/>
    <property type="project" value="UniProt"/>
</dbReference>
<dbReference type="GO" id="GO:0005096">
    <property type="term" value="F:GTPase activator activity"/>
    <property type="evidence" value="ECO:0007669"/>
    <property type="project" value="UniProtKB-KW"/>
</dbReference>
<dbReference type="GO" id="GO:0005093">
    <property type="term" value="F:Rab GDP-dissociation inhibitor activity"/>
    <property type="evidence" value="ECO:0000250"/>
    <property type="project" value="UniProtKB"/>
</dbReference>
<dbReference type="GO" id="GO:0031267">
    <property type="term" value="F:small GTPase binding"/>
    <property type="evidence" value="ECO:0007669"/>
    <property type="project" value="Ensembl"/>
</dbReference>
<dbReference type="GO" id="GO:0050771">
    <property type="term" value="P:negative regulation of axonogenesis"/>
    <property type="evidence" value="ECO:0000250"/>
    <property type="project" value="UniProtKB"/>
</dbReference>
<dbReference type="GO" id="GO:0090315">
    <property type="term" value="P:negative regulation of protein targeting to membrane"/>
    <property type="evidence" value="ECO:0000315"/>
    <property type="project" value="UniProtKB"/>
</dbReference>
<dbReference type="GO" id="GO:0045773">
    <property type="term" value="P:positive regulation of axon extension"/>
    <property type="evidence" value="ECO:0007669"/>
    <property type="project" value="Ensembl"/>
</dbReference>
<dbReference type="GO" id="GO:0034123">
    <property type="term" value="P:positive regulation of toll-like receptor signaling pathway"/>
    <property type="evidence" value="ECO:0000314"/>
    <property type="project" value="UniProt"/>
</dbReference>
<dbReference type="GO" id="GO:0015031">
    <property type="term" value="P:protein transport"/>
    <property type="evidence" value="ECO:0007669"/>
    <property type="project" value="InterPro"/>
</dbReference>
<dbReference type="GO" id="GO:0032482">
    <property type="term" value="P:Rab protein signal transduction"/>
    <property type="evidence" value="ECO:0000250"/>
    <property type="project" value="UniProtKB"/>
</dbReference>
<dbReference type="GO" id="GO:0051592">
    <property type="term" value="P:response to calcium ion"/>
    <property type="evidence" value="ECO:0007669"/>
    <property type="project" value="Ensembl"/>
</dbReference>
<dbReference type="GO" id="GO:0007165">
    <property type="term" value="P:signal transduction"/>
    <property type="evidence" value="ECO:0000304"/>
    <property type="project" value="ProtInc"/>
</dbReference>
<dbReference type="GO" id="GO:0016192">
    <property type="term" value="P:vesicle-mediated transport"/>
    <property type="evidence" value="ECO:0000318"/>
    <property type="project" value="GO_Central"/>
</dbReference>
<dbReference type="FunFam" id="1.10.405.10:FF:000001">
    <property type="entry name" value="Rab GDP dissociation inhibitor"/>
    <property type="match status" value="1"/>
</dbReference>
<dbReference type="FunFam" id="3.30.519.10:FF:000005">
    <property type="entry name" value="Rab GDP dissociation inhibitor"/>
    <property type="match status" value="1"/>
</dbReference>
<dbReference type="FunFam" id="3.30.519.10:FF:000014">
    <property type="entry name" value="Rab GDP dissociation inhibitor"/>
    <property type="match status" value="1"/>
</dbReference>
<dbReference type="FunFam" id="3.50.50.60:FF:000158">
    <property type="entry name" value="Rab GDP dissociation inhibitor"/>
    <property type="match status" value="1"/>
</dbReference>
<dbReference type="FunFam" id="3.50.50.60:FF:000232">
    <property type="entry name" value="Rab GDP dissociation inhibitor"/>
    <property type="match status" value="1"/>
</dbReference>
<dbReference type="Gene3D" id="3.50.50.60">
    <property type="entry name" value="FAD/NAD(P)-binding domain"/>
    <property type="match status" value="1"/>
</dbReference>
<dbReference type="Gene3D" id="1.10.405.10">
    <property type="entry name" value="Guanine Nucleotide Dissociation Inhibitor, domain 1"/>
    <property type="match status" value="1"/>
</dbReference>
<dbReference type="Gene3D" id="3.30.519.10">
    <property type="entry name" value="Guanine Nucleotide Dissociation Inhibitor, domain 2"/>
    <property type="match status" value="1"/>
</dbReference>
<dbReference type="InterPro" id="IPR036188">
    <property type="entry name" value="FAD/NAD-bd_sf"/>
</dbReference>
<dbReference type="InterPro" id="IPR018203">
    <property type="entry name" value="GDP_dissociation_inhibitor"/>
</dbReference>
<dbReference type="InterPro" id="IPR000806">
    <property type="entry name" value="RabGDI"/>
</dbReference>
<dbReference type="PANTHER" id="PTHR11787:SF3">
    <property type="entry name" value="RAB GDP DISSOCIATION INHIBITOR ALPHA"/>
    <property type="match status" value="1"/>
</dbReference>
<dbReference type="PANTHER" id="PTHR11787">
    <property type="entry name" value="RAB GDP-DISSOCIATION INHIBITOR"/>
    <property type="match status" value="1"/>
</dbReference>
<dbReference type="Pfam" id="PF00996">
    <property type="entry name" value="GDI"/>
    <property type="match status" value="1"/>
</dbReference>
<dbReference type="PRINTS" id="PR00892">
    <property type="entry name" value="RABGDI"/>
</dbReference>
<dbReference type="PRINTS" id="PR00891">
    <property type="entry name" value="RABGDIREP"/>
</dbReference>
<dbReference type="SUPFAM" id="SSF51905">
    <property type="entry name" value="FAD/NAD(P)-binding domain"/>
    <property type="match status" value="2"/>
</dbReference>
<gene>
    <name type="primary">GDI1</name>
    <name type="synonym">GDIL</name>
    <name type="synonym">OPHN2</name>
    <name type="synonym">RABGDIA</name>
    <name type="synonym">XAP4</name>
</gene>
<organism>
    <name type="scientific">Homo sapiens</name>
    <name type="common">Human</name>
    <dbReference type="NCBI Taxonomy" id="9606"/>
    <lineage>
        <taxon>Eukaryota</taxon>
        <taxon>Metazoa</taxon>
        <taxon>Chordata</taxon>
        <taxon>Craniata</taxon>
        <taxon>Vertebrata</taxon>
        <taxon>Euteleostomi</taxon>
        <taxon>Mammalia</taxon>
        <taxon>Eutheria</taxon>
        <taxon>Euarchontoglires</taxon>
        <taxon>Primates</taxon>
        <taxon>Haplorrhini</taxon>
        <taxon>Catarrhini</taxon>
        <taxon>Hominidae</taxon>
        <taxon>Homo</taxon>
    </lineage>
</organism>
<evidence type="ECO:0000269" key="1">
    <source>
    </source>
</evidence>
<evidence type="ECO:0000269" key="2">
    <source>
    </source>
</evidence>
<evidence type="ECO:0000269" key="3">
    <source>
    </source>
</evidence>
<evidence type="ECO:0000269" key="4">
    <source>
    </source>
</evidence>
<evidence type="ECO:0000269" key="5">
    <source>
    </source>
</evidence>
<evidence type="ECO:0000269" key="6">
    <source>
    </source>
</evidence>
<evidence type="ECO:0000269" key="7">
    <source>
    </source>
</evidence>
<evidence type="ECO:0000269" key="8">
    <source>
    </source>
</evidence>
<evidence type="ECO:0000305" key="9"/>
<proteinExistence type="evidence at protein level"/>
<comment type="function">
    <text evidence="3">Regulates the GDP/GTP exchange reaction of most Rab proteins by inhibiting the dissociation of GDP from them, and the subsequent binding of GTP to them. Promotes the dissociation of GDP-bound Rab proteins from the membrane and inhibits their activation. Promotes the dissociation of RAB1A, RAB3A, RAB5A and RAB10 from membranes.</text>
</comment>
<comment type="subunit">
    <text evidence="1 2 3 4 5">Interacts with RHOH (PubMed:11809807). Interacts with the non-phosphorylated forms of RAB1A, RAB3A, RAB5A, RAB5B, RAB5C, RAB8A, RAB8B, RAB10, RAB12, RAB35, and RAB43 (PubMed:19570034, PubMed:23815289, PubMed:26824392, PubMed:29125462).</text>
</comment>
<comment type="interaction">
    <interactant intactId="EBI-946999">
        <id>P31150</id>
    </interactant>
    <interactant intactId="EBI-739832">
        <id>Q8TBB1</id>
        <label>LNX1</label>
    </interactant>
    <organismsDiffer>false</organismsDiffer>
    <experiments>6</experiments>
</comment>
<comment type="interaction">
    <interactant intactId="EBI-946999">
        <id>P31150</id>
    </interactant>
    <interactant intactId="EBI-716845">
        <id>P62820</id>
        <label>RAB1A</label>
    </interactant>
    <organismsDiffer>false</organismsDiffer>
    <experiments>7</experiments>
</comment>
<comment type="interaction">
    <interactant intactId="EBI-946999">
        <id>P31150</id>
    </interactant>
    <interactant intactId="EBI-722284">
        <id>P20338</id>
        <label>RAB4A</label>
    </interactant>
    <organismsDiffer>false</organismsDiffer>
    <experiments>8</experiments>
</comment>
<comment type="interaction">
    <interactant intactId="EBI-946999">
        <id>P31150</id>
    </interactant>
    <interactant intactId="EBI-2513462">
        <id>Q9UHP3</id>
        <label>USP25</label>
    </interactant>
    <organismsDiffer>false</organismsDiffer>
    <experiments>3</experiments>
</comment>
<comment type="interaction">
    <interactant intactId="EBI-946999">
        <id>P31150</id>
    </interactant>
    <interactant intactId="EBI-911581">
        <id>P61027</id>
        <label>Rab10</label>
    </interactant>
    <organismsDiffer>true</organismsDiffer>
    <experiments>3</experiments>
</comment>
<comment type="subcellular location">
    <subcellularLocation>
        <location evidence="2">Cytoplasm</location>
    </subcellularLocation>
    <subcellularLocation>
        <location evidence="2">Golgi apparatus</location>
        <location evidence="2">trans-Golgi network</location>
    </subcellularLocation>
</comment>
<comment type="tissue specificity">
    <text evidence="6">Brain; predominant in neural and sensory tissues.</text>
</comment>
<comment type="disease" evidence="7 8">
    <disease id="DI-00728">
        <name>Intellectual developmental disorder, X-linked 41</name>
        <acronym>XLID41</acronym>
        <description>A disorder characterized by significantly below average general intellectual functioning associated with impairments in adaptive behavior and manifested during the developmental period. Intellectual deficiency is the only primary symptom of non-syndromic X-linked forms, while syndromic forms present with associated physical, neurological and/or psychiatric manifestations.</description>
        <dbReference type="MIM" id="300849"/>
    </disease>
    <text>The disease is caused by variants affecting the gene represented in this entry.</text>
</comment>
<comment type="similarity">
    <text evidence="9">Belongs to the Rab GDI family.</text>
</comment>
<sequence>MDEEYDVIVLGTGLTECILSGIMSVNGKKVLHMDRNPYYGGESSSITPLEELYKRFQLLEGPPESMGRGRDWNVDLIPKFLMANGQLVKMLLYTEVTRYLDFKVVEGSFVYKGGKIYKVPSTETEALASNLMGMFEKRRFRKFLVFVANFDENDPKTFEGVDPQTTSMRDVYRKFDLGQDVIDFTGHALALYRTDDYLDQPCLETVNRIKLYSESLARYGKSPYLYPLYGLGELPQGFARLSAIYGGTYMLNKPVDDIIMENGKVVGVKSEGEVARCKQLICDPSYIPDRVRKAGQVIRIICILSHPIKNTNDANSCQIIIPQNQVNRKSDIYVCMISYAHNVAAQGKYIAIASTTVETTDPEKEVEPALELLEPIDQKFVAISDLYEPIDDGCESQVFCSCSYDATTHFETTCNDIKDIYKRMAGTAFDFENMKRKQNDVFGEAEQ</sequence>